<dbReference type="EC" id="1.2.-.-"/>
<dbReference type="EMBL" id="LT708304">
    <property type="protein sequence ID" value="SIU01597.1"/>
    <property type="molecule type" value="Genomic_DNA"/>
</dbReference>
<dbReference type="RefSeq" id="NP_856620.1">
    <property type="nucleotide sequence ID" value="NC_002945.3"/>
</dbReference>
<dbReference type="RefSeq" id="WP_003414891.1">
    <property type="nucleotide sequence ID" value="NC_002945.4"/>
</dbReference>
<dbReference type="SMR" id="Q7TXK4"/>
<dbReference type="KEGG" id="mbo:BQ2027_MB2975C"/>
<dbReference type="PATRIC" id="fig|233413.5.peg.3268"/>
<dbReference type="BioCyc" id="MetaCyc:MONOMER-19633"/>
<dbReference type="Proteomes" id="UP000001419">
    <property type="component" value="Chromosome"/>
</dbReference>
<dbReference type="GO" id="GO:0016705">
    <property type="term" value="F:oxidoreductase activity, acting on paired donors, with incorporation or reduction of molecular oxygen"/>
    <property type="evidence" value="ECO:0007669"/>
    <property type="project" value="InterPro"/>
</dbReference>
<dbReference type="GO" id="GO:0006629">
    <property type="term" value="P:lipid metabolic process"/>
    <property type="evidence" value="ECO:0007669"/>
    <property type="project" value="UniProtKB-KW"/>
</dbReference>
<dbReference type="CDD" id="cd01097">
    <property type="entry name" value="Tetrahydromethanopterin_reductase"/>
    <property type="match status" value="1"/>
</dbReference>
<dbReference type="FunFam" id="3.20.20.30:FF:000015">
    <property type="entry name" value="Phthiodiolone/phenolphthiodiolone dimycocerosates ketoreductase"/>
    <property type="match status" value="1"/>
</dbReference>
<dbReference type="Gene3D" id="3.20.20.30">
    <property type="entry name" value="Luciferase-like domain"/>
    <property type="match status" value="1"/>
</dbReference>
<dbReference type="InterPro" id="IPR050564">
    <property type="entry name" value="F420-G6PD/mer"/>
</dbReference>
<dbReference type="InterPro" id="IPR011251">
    <property type="entry name" value="Luciferase-like_dom"/>
</dbReference>
<dbReference type="InterPro" id="IPR036661">
    <property type="entry name" value="Luciferase-like_sf"/>
</dbReference>
<dbReference type="PANTHER" id="PTHR43244">
    <property type="match status" value="1"/>
</dbReference>
<dbReference type="PANTHER" id="PTHR43244:SF1">
    <property type="entry name" value="5,10-METHYLENETETRAHYDROMETHANOPTERIN REDUCTASE"/>
    <property type="match status" value="1"/>
</dbReference>
<dbReference type="Pfam" id="PF00296">
    <property type="entry name" value="Bac_luciferase"/>
    <property type="match status" value="1"/>
</dbReference>
<dbReference type="SUPFAM" id="SSF51679">
    <property type="entry name" value="Bacterial luciferase-like"/>
    <property type="match status" value="1"/>
</dbReference>
<evidence type="ECO:0000250" key="1"/>
<evidence type="ECO:0000305" key="2"/>
<gene>
    <name type="ordered locus">BQ2027_MB2975C</name>
</gene>
<sequence length="381" mass="41348">MGGLRFGFVDALVHSRLPPTLPARSSMAAATVMGADSYWVGDHLNALVPRSIATSEYLGIAAKFVPKIDANYEPWTMLGNLAFGLPSRLRLGVCVTDAGRRNPAVTAQAAATLHLLTRGRAILGIGVGEREGNEPYGVEWTKPVARFEEALATIRALWNSNGELISRESPYFPLHNALFDLPPYRGKWPEIWVAAHGPRMLRATGRYADAWIPIVVVRPSDYSRALEAVRSAASDAGRDPMSITPAAVRGIITGRNRDDVEEALESVVVKMTALGVPGEAWARHGVEHPMGADFSGVQDIIPQTMDKQTVLSYAAKVPAALMKEVVFSGTPDEVIDQVAEWRDHGLRYVVLINGSLVNPSLRKTVTAVLPHAKVLRGLKKL</sequence>
<accession>Q7TXK4</accession>
<accession>A0A1R3Y2U6</accession>
<accession>X2BM02</accession>
<protein>
    <recommendedName>
        <fullName>Phthiodiolone/phenolphthiodiolone dimycocerosates ketoreductase</fullName>
        <ecNumber>1.2.-.-</ecNumber>
    </recommendedName>
</protein>
<reference key="1">
    <citation type="journal article" date="2003" name="Proc. Natl. Acad. Sci. U.S.A.">
        <title>The complete genome sequence of Mycobacterium bovis.</title>
        <authorList>
            <person name="Garnier T."/>
            <person name="Eiglmeier K."/>
            <person name="Camus J.-C."/>
            <person name="Medina N."/>
            <person name="Mansoor H."/>
            <person name="Pryor M."/>
            <person name="Duthoy S."/>
            <person name="Grondin S."/>
            <person name="Lacroix C."/>
            <person name="Monsempe C."/>
            <person name="Simon S."/>
            <person name="Harris B."/>
            <person name="Atkin R."/>
            <person name="Doggett J."/>
            <person name="Mayes R."/>
            <person name="Keating L."/>
            <person name="Wheeler P.R."/>
            <person name="Parkhill J."/>
            <person name="Barrell B.G."/>
            <person name="Cole S.T."/>
            <person name="Gordon S.V."/>
            <person name="Hewinson R.G."/>
        </authorList>
    </citation>
    <scope>NUCLEOTIDE SEQUENCE [LARGE SCALE GENOMIC DNA]</scope>
    <source>
        <strain>ATCC BAA-935 / AF2122/97</strain>
    </source>
</reference>
<reference key="2">
    <citation type="journal article" date="2017" name="Genome Announc.">
        <title>Updated reference genome sequence and annotation of Mycobacterium bovis AF2122/97.</title>
        <authorList>
            <person name="Malone K.M."/>
            <person name="Farrell D."/>
            <person name="Stuber T.P."/>
            <person name="Schubert O.T."/>
            <person name="Aebersold R."/>
            <person name="Robbe-Austerman S."/>
            <person name="Gordon S.V."/>
        </authorList>
    </citation>
    <scope>NUCLEOTIDE SEQUENCE [LARGE SCALE GENOMIC DNA]</scope>
    <scope>GENOME REANNOTATION</scope>
    <source>
        <strain>ATCC BAA-935 / AF2122/97</strain>
    </source>
</reference>
<proteinExistence type="inferred from homology"/>
<keyword id="KW-0444">Lipid biosynthesis</keyword>
<keyword id="KW-0443">Lipid metabolism</keyword>
<keyword id="KW-0560">Oxidoreductase</keyword>
<keyword id="KW-1185">Reference proteome</keyword>
<comment type="function">
    <text evidence="1">Catalyzes the reduction of the keto moiety of phthiodiolone dimycocerosates (DIM B) and glycosylated phenolphthiodiolone dimycocerosates to form the intermediate compounds phthiotriol and glycosylated phenolphthiotriol dimycocerosates during phthiocerol dimycocerosates (DIM A) and glycosylated phenolphthiocerol dimycocerosates (PGL) biosynthesis.</text>
</comment>
<comment type="similarity">
    <text evidence="2">Belongs to the mer family. Phthiodiolone/phenolphthiodiolone dimycocerosates ketoreductase subfamily.</text>
</comment>
<feature type="chain" id="PRO_0000309347" description="Phthiodiolone/phenolphthiodiolone dimycocerosates ketoreductase">
    <location>
        <begin position="1"/>
        <end position="381"/>
    </location>
</feature>
<name>PHKR_MYCBO</name>
<organism>
    <name type="scientific">Mycobacterium bovis (strain ATCC BAA-935 / AF2122/97)</name>
    <dbReference type="NCBI Taxonomy" id="233413"/>
    <lineage>
        <taxon>Bacteria</taxon>
        <taxon>Bacillati</taxon>
        <taxon>Actinomycetota</taxon>
        <taxon>Actinomycetes</taxon>
        <taxon>Mycobacteriales</taxon>
        <taxon>Mycobacteriaceae</taxon>
        <taxon>Mycobacterium</taxon>
        <taxon>Mycobacterium tuberculosis complex</taxon>
    </lineage>
</organism>